<proteinExistence type="inferred from homology"/>
<accession>A6H0L2</accession>
<reference key="1">
    <citation type="journal article" date="2007" name="Nat. Biotechnol.">
        <title>Complete genome sequence of the fish pathogen Flavobacterium psychrophilum.</title>
        <authorList>
            <person name="Duchaud E."/>
            <person name="Boussaha M."/>
            <person name="Loux V."/>
            <person name="Bernardet J.-F."/>
            <person name="Michel C."/>
            <person name="Kerouault B."/>
            <person name="Mondot S."/>
            <person name="Nicolas P."/>
            <person name="Bossy R."/>
            <person name="Caron C."/>
            <person name="Bessieres P."/>
            <person name="Gibrat J.-F."/>
            <person name="Claverol S."/>
            <person name="Dumetz F."/>
            <person name="Le Henaff M."/>
            <person name="Benmansour A."/>
        </authorList>
    </citation>
    <scope>NUCLEOTIDE SEQUENCE [LARGE SCALE GENOMIC DNA]</scope>
    <source>
        <strain>ATCC 49511 / DSM 21280 / CIP 103535 / JIP02/86</strain>
    </source>
</reference>
<comment type="function">
    <text evidence="1">Pyrophosphatase that catalyzes the hydrolysis of nucleoside triphosphates to their monophosphate derivatives, with a high preference for the non-canonical purine nucleotides XTP (xanthosine triphosphate), dITP (deoxyinosine triphosphate) and ITP. Seems to function as a house-cleaning enzyme that removes non-canonical purine nucleotides from the nucleotide pool, thus preventing their incorporation into DNA/RNA and avoiding chromosomal lesions.</text>
</comment>
<comment type="catalytic activity">
    <reaction evidence="1">
        <text>XTP + H2O = XMP + diphosphate + H(+)</text>
        <dbReference type="Rhea" id="RHEA:28610"/>
        <dbReference type="ChEBI" id="CHEBI:15377"/>
        <dbReference type="ChEBI" id="CHEBI:15378"/>
        <dbReference type="ChEBI" id="CHEBI:33019"/>
        <dbReference type="ChEBI" id="CHEBI:57464"/>
        <dbReference type="ChEBI" id="CHEBI:61314"/>
        <dbReference type="EC" id="3.6.1.66"/>
    </reaction>
</comment>
<comment type="catalytic activity">
    <reaction evidence="1">
        <text>dITP + H2O = dIMP + diphosphate + H(+)</text>
        <dbReference type="Rhea" id="RHEA:28342"/>
        <dbReference type="ChEBI" id="CHEBI:15377"/>
        <dbReference type="ChEBI" id="CHEBI:15378"/>
        <dbReference type="ChEBI" id="CHEBI:33019"/>
        <dbReference type="ChEBI" id="CHEBI:61194"/>
        <dbReference type="ChEBI" id="CHEBI:61382"/>
        <dbReference type="EC" id="3.6.1.66"/>
    </reaction>
</comment>
<comment type="catalytic activity">
    <reaction evidence="1">
        <text>ITP + H2O = IMP + diphosphate + H(+)</text>
        <dbReference type="Rhea" id="RHEA:29399"/>
        <dbReference type="ChEBI" id="CHEBI:15377"/>
        <dbReference type="ChEBI" id="CHEBI:15378"/>
        <dbReference type="ChEBI" id="CHEBI:33019"/>
        <dbReference type="ChEBI" id="CHEBI:58053"/>
        <dbReference type="ChEBI" id="CHEBI:61402"/>
        <dbReference type="EC" id="3.6.1.66"/>
    </reaction>
</comment>
<comment type="cofactor">
    <cofactor evidence="1">
        <name>Mg(2+)</name>
        <dbReference type="ChEBI" id="CHEBI:18420"/>
    </cofactor>
    <text evidence="1">Binds 1 Mg(2+) ion per subunit.</text>
</comment>
<comment type="subunit">
    <text evidence="1">Homodimer.</text>
</comment>
<comment type="similarity">
    <text evidence="1">Belongs to the HAM1 NTPase family.</text>
</comment>
<organism>
    <name type="scientific">Flavobacterium psychrophilum (strain ATCC 49511 / DSM 21280 / CIP 103535 / JIP02/86)</name>
    <dbReference type="NCBI Taxonomy" id="402612"/>
    <lineage>
        <taxon>Bacteria</taxon>
        <taxon>Pseudomonadati</taxon>
        <taxon>Bacteroidota</taxon>
        <taxon>Flavobacteriia</taxon>
        <taxon>Flavobacteriales</taxon>
        <taxon>Flavobacteriaceae</taxon>
        <taxon>Flavobacterium</taxon>
    </lineage>
</organism>
<keyword id="KW-0378">Hydrolase</keyword>
<keyword id="KW-0460">Magnesium</keyword>
<keyword id="KW-0479">Metal-binding</keyword>
<keyword id="KW-0546">Nucleotide metabolism</keyword>
<keyword id="KW-0547">Nucleotide-binding</keyword>
<keyword id="KW-1185">Reference proteome</keyword>
<name>IXTPA_FLAPJ</name>
<feature type="chain" id="PRO_1000068421" description="dITP/XTP pyrophosphatase">
    <location>
        <begin position="1"/>
        <end position="190"/>
    </location>
</feature>
<feature type="active site" description="Proton acceptor" evidence="1">
    <location>
        <position position="68"/>
    </location>
</feature>
<feature type="binding site" evidence="1">
    <location>
        <begin position="7"/>
        <end position="12"/>
    </location>
    <ligand>
        <name>substrate</name>
    </ligand>
</feature>
<feature type="binding site" evidence="1">
    <location>
        <position position="68"/>
    </location>
    <ligand>
        <name>Mg(2+)</name>
        <dbReference type="ChEBI" id="CHEBI:18420"/>
    </ligand>
</feature>
<feature type="binding site" evidence="1">
    <location>
        <position position="69"/>
    </location>
    <ligand>
        <name>substrate</name>
    </ligand>
</feature>
<feature type="binding site" evidence="1">
    <location>
        <begin position="148"/>
        <end position="151"/>
    </location>
    <ligand>
        <name>substrate</name>
    </ligand>
</feature>
<feature type="binding site" evidence="1">
    <location>
        <position position="171"/>
    </location>
    <ligand>
        <name>substrate</name>
    </ligand>
</feature>
<feature type="binding site" evidence="1">
    <location>
        <begin position="176"/>
        <end position="177"/>
    </location>
    <ligand>
        <name>substrate</name>
    </ligand>
</feature>
<evidence type="ECO:0000255" key="1">
    <source>
        <dbReference type="HAMAP-Rule" id="MF_01405"/>
    </source>
</evidence>
<protein>
    <recommendedName>
        <fullName evidence="1">dITP/XTP pyrophosphatase</fullName>
        <ecNumber evidence="1">3.6.1.66</ecNumber>
    </recommendedName>
    <alternativeName>
        <fullName evidence="1">Non-canonical purine NTP pyrophosphatase</fullName>
    </alternativeName>
    <alternativeName>
        <fullName evidence="1">Non-standard purine NTP pyrophosphatase</fullName>
    </alternativeName>
    <alternativeName>
        <fullName evidence="1">Nucleoside-triphosphate diphosphatase</fullName>
    </alternativeName>
    <alternativeName>
        <fullName evidence="1">Nucleoside-triphosphate pyrophosphatase</fullName>
        <shortName evidence="1">NTPase</shortName>
    </alternativeName>
</protein>
<gene>
    <name type="ordered locus">FP1819</name>
</gene>
<sequence>MQLVFASNNKNKILEIQSMLPESIKILSLSDIGCHEDIPETANTIEGNAILKANYVTQKYGYDCFADDTGLEVEVLNGQPGVFSARYAGEQRNDNDNMDKLLTELDDKTNRNAQFKTVICLNINNKQHLFTGIAKGNIVKNKIGNQGFGYDPIFQPEGYQYTFAQISLEEKANISHRGKATRALIDFFKN</sequence>
<dbReference type="EC" id="3.6.1.66" evidence="1"/>
<dbReference type="EMBL" id="AM398681">
    <property type="protein sequence ID" value="CAL43885.1"/>
    <property type="molecule type" value="Genomic_DNA"/>
</dbReference>
<dbReference type="RefSeq" id="WP_011963926.1">
    <property type="nucleotide sequence ID" value="NC_009613.3"/>
</dbReference>
<dbReference type="RefSeq" id="YP_001296690.1">
    <property type="nucleotide sequence ID" value="NC_009613.3"/>
</dbReference>
<dbReference type="SMR" id="A6H0L2"/>
<dbReference type="STRING" id="402612.FP1819"/>
<dbReference type="EnsemblBacteria" id="CAL43885">
    <property type="protein sequence ID" value="CAL43885"/>
    <property type="gene ID" value="FP1819"/>
</dbReference>
<dbReference type="KEGG" id="fps:FP1819"/>
<dbReference type="PATRIC" id="fig|402612.5.peg.1840"/>
<dbReference type="eggNOG" id="COG0127">
    <property type="taxonomic scope" value="Bacteria"/>
</dbReference>
<dbReference type="HOGENOM" id="CLU_082080_0_2_10"/>
<dbReference type="OrthoDB" id="9807456at2"/>
<dbReference type="Proteomes" id="UP000006394">
    <property type="component" value="Chromosome"/>
</dbReference>
<dbReference type="GO" id="GO:0005829">
    <property type="term" value="C:cytosol"/>
    <property type="evidence" value="ECO:0007669"/>
    <property type="project" value="TreeGrafter"/>
</dbReference>
<dbReference type="GO" id="GO:0035870">
    <property type="term" value="F:dITP diphosphatase activity"/>
    <property type="evidence" value="ECO:0007669"/>
    <property type="project" value="RHEA"/>
</dbReference>
<dbReference type="GO" id="GO:0036220">
    <property type="term" value="F:ITP diphosphatase activity"/>
    <property type="evidence" value="ECO:0007669"/>
    <property type="project" value="UniProtKB-EC"/>
</dbReference>
<dbReference type="GO" id="GO:0046872">
    <property type="term" value="F:metal ion binding"/>
    <property type="evidence" value="ECO:0007669"/>
    <property type="project" value="UniProtKB-KW"/>
</dbReference>
<dbReference type="GO" id="GO:0000166">
    <property type="term" value="F:nucleotide binding"/>
    <property type="evidence" value="ECO:0007669"/>
    <property type="project" value="UniProtKB-KW"/>
</dbReference>
<dbReference type="GO" id="GO:0017111">
    <property type="term" value="F:ribonucleoside triphosphate phosphatase activity"/>
    <property type="evidence" value="ECO:0007669"/>
    <property type="project" value="InterPro"/>
</dbReference>
<dbReference type="GO" id="GO:0036222">
    <property type="term" value="F:XTP diphosphatase activity"/>
    <property type="evidence" value="ECO:0007669"/>
    <property type="project" value="RHEA"/>
</dbReference>
<dbReference type="GO" id="GO:0009117">
    <property type="term" value="P:nucleotide metabolic process"/>
    <property type="evidence" value="ECO:0007669"/>
    <property type="project" value="UniProtKB-KW"/>
</dbReference>
<dbReference type="GO" id="GO:0009146">
    <property type="term" value="P:purine nucleoside triphosphate catabolic process"/>
    <property type="evidence" value="ECO:0007669"/>
    <property type="project" value="UniProtKB-UniRule"/>
</dbReference>
<dbReference type="CDD" id="cd00515">
    <property type="entry name" value="HAM1"/>
    <property type="match status" value="1"/>
</dbReference>
<dbReference type="FunFam" id="3.90.950.10:FF:000001">
    <property type="entry name" value="dITP/XTP pyrophosphatase"/>
    <property type="match status" value="1"/>
</dbReference>
<dbReference type="Gene3D" id="3.90.950.10">
    <property type="match status" value="1"/>
</dbReference>
<dbReference type="HAMAP" id="MF_01405">
    <property type="entry name" value="Non_canon_purine_NTPase"/>
    <property type="match status" value="1"/>
</dbReference>
<dbReference type="InterPro" id="IPR020922">
    <property type="entry name" value="dITP/XTP_pyrophosphatase"/>
</dbReference>
<dbReference type="InterPro" id="IPR029001">
    <property type="entry name" value="ITPase-like_fam"/>
</dbReference>
<dbReference type="InterPro" id="IPR002637">
    <property type="entry name" value="RdgB/HAM1"/>
</dbReference>
<dbReference type="NCBIfam" id="NF011398">
    <property type="entry name" value="PRK14823.1"/>
    <property type="match status" value="1"/>
</dbReference>
<dbReference type="NCBIfam" id="TIGR00042">
    <property type="entry name" value="RdgB/HAM1 family non-canonical purine NTP pyrophosphatase"/>
    <property type="match status" value="1"/>
</dbReference>
<dbReference type="PANTHER" id="PTHR11067:SF9">
    <property type="entry name" value="INOSINE TRIPHOSPHATE PYROPHOSPHATASE"/>
    <property type="match status" value="1"/>
</dbReference>
<dbReference type="PANTHER" id="PTHR11067">
    <property type="entry name" value="INOSINE TRIPHOSPHATE PYROPHOSPHATASE/HAM1 PROTEIN"/>
    <property type="match status" value="1"/>
</dbReference>
<dbReference type="Pfam" id="PF01725">
    <property type="entry name" value="Ham1p_like"/>
    <property type="match status" value="1"/>
</dbReference>
<dbReference type="SUPFAM" id="SSF52972">
    <property type="entry name" value="ITPase-like"/>
    <property type="match status" value="1"/>
</dbReference>